<feature type="chain" id="PRO_0000225719" description="Large ribosomal subunit protein bL32">
    <location>
        <begin position="1"/>
        <end position="72"/>
    </location>
</feature>
<keyword id="KW-0687">Ribonucleoprotein</keyword>
<keyword id="KW-0689">Ribosomal protein</keyword>
<accession>Q3Z712</accession>
<organism>
    <name type="scientific">Dehalococcoides mccartyi (strain ATCC BAA-2266 / KCTC 15142 / 195)</name>
    <name type="common">Dehalococcoides ethenogenes (strain 195)</name>
    <dbReference type="NCBI Taxonomy" id="243164"/>
    <lineage>
        <taxon>Bacteria</taxon>
        <taxon>Bacillati</taxon>
        <taxon>Chloroflexota</taxon>
        <taxon>Dehalococcoidia</taxon>
        <taxon>Dehalococcoidales</taxon>
        <taxon>Dehalococcoidaceae</taxon>
        <taxon>Dehalococcoides</taxon>
    </lineage>
</organism>
<proteinExistence type="inferred from homology"/>
<sequence>MALPKRRLSHARQGNRRAHVALSAPAVMECPQCNSPKLSHQACSVCGTYNGRTVVDVDAIAKKKADKSKGQQ</sequence>
<comment type="similarity">
    <text evidence="1">Belongs to the bacterial ribosomal protein bL32 family.</text>
</comment>
<name>RL32_DEHM1</name>
<dbReference type="EMBL" id="CP000027">
    <property type="protein sequence ID" value="AAW39447.1"/>
    <property type="molecule type" value="Genomic_DNA"/>
</dbReference>
<dbReference type="RefSeq" id="WP_010936964.1">
    <property type="nucleotide sequence ID" value="NC_002936.3"/>
</dbReference>
<dbReference type="SMR" id="Q3Z712"/>
<dbReference type="FunCoup" id="Q3Z712">
    <property type="interactions" value="128"/>
</dbReference>
<dbReference type="STRING" id="243164.DET1275"/>
<dbReference type="GeneID" id="3229407"/>
<dbReference type="KEGG" id="det:DET1275"/>
<dbReference type="PATRIC" id="fig|243164.10.peg.1205"/>
<dbReference type="eggNOG" id="COG0333">
    <property type="taxonomic scope" value="Bacteria"/>
</dbReference>
<dbReference type="HOGENOM" id="CLU_129084_1_3_0"/>
<dbReference type="InParanoid" id="Q3Z712"/>
<dbReference type="Proteomes" id="UP000008289">
    <property type="component" value="Chromosome"/>
</dbReference>
<dbReference type="GO" id="GO:0015934">
    <property type="term" value="C:large ribosomal subunit"/>
    <property type="evidence" value="ECO:0007669"/>
    <property type="project" value="InterPro"/>
</dbReference>
<dbReference type="GO" id="GO:0003735">
    <property type="term" value="F:structural constituent of ribosome"/>
    <property type="evidence" value="ECO:0007669"/>
    <property type="project" value="InterPro"/>
</dbReference>
<dbReference type="GO" id="GO:0006412">
    <property type="term" value="P:translation"/>
    <property type="evidence" value="ECO:0007669"/>
    <property type="project" value="UniProtKB-UniRule"/>
</dbReference>
<dbReference type="HAMAP" id="MF_00340">
    <property type="entry name" value="Ribosomal_bL32"/>
    <property type="match status" value="1"/>
</dbReference>
<dbReference type="InterPro" id="IPR002677">
    <property type="entry name" value="Ribosomal_bL32"/>
</dbReference>
<dbReference type="InterPro" id="IPR044957">
    <property type="entry name" value="Ribosomal_bL32_bact"/>
</dbReference>
<dbReference type="InterPro" id="IPR011332">
    <property type="entry name" value="Ribosomal_zn-bd"/>
</dbReference>
<dbReference type="NCBIfam" id="TIGR01031">
    <property type="entry name" value="rpmF_bact"/>
    <property type="match status" value="1"/>
</dbReference>
<dbReference type="PANTHER" id="PTHR35534">
    <property type="entry name" value="50S RIBOSOMAL PROTEIN L32"/>
    <property type="match status" value="1"/>
</dbReference>
<dbReference type="PANTHER" id="PTHR35534:SF1">
    <property type="entry name" value="LARGE RIBOSOMAL SUBUNIT PROTEIN BL32"/>
    <property type="match status" value="1"/>
</dbReference>
<dbReference type="Pfam" id="PF01783">
    <property type="entry name" value="Ribosomal_L32p"/>
    <property type="match status" value="1"/>
</dbReference>
<dbReference type="SUPFAM" id="SSF57829">
    <property type="entry name" value="Zn-binding ribosomal proteins"/>
    <property type="match status" value="1"/>
</dbReference>
<evidence type="ECO:0000255" key="1">
    <source>
        <dbReference type="HAMAP-Rule" id="MF_00340"/>
    </source>
</evidence>
<evidence type="ECO:0000305" key="2"/>
<gene>
    <name evidence="1" type="primary">rpmF</name>
    <name type="ordered locus">DET1275</name>
</gene>
<protein>
    <recommendedName>
        <fullName evidence="1">Large ribosomal subunit protein bL32</fullName>
    </recommendedName>
    <alternativeName>
        <fullName evidence="2">50S ribosomal protein L32</fullName>
    </alternativeName>
</protein>
<reference key="1">
    <citation type="journal article" date="2005" name="Science">
        <title>Genome sequence of the PCE-dechlorinating bacterium Dehalococcoides ethenogenes.</title>
        <authorList>
            <person name="Seshadri R."/>
            <person name="Adrian L."/>
            <person name="Fouts D.E."/>
            <person name="Eisen J.A."/>
            <person name="Phillippy A.M."/>
            <person name="Methe B.A."/>
            <person name="Ward N.L."/>
            <person name="Nelson W.C."/>
            <person name="DeBoy R.T."/>
            <person name="Khouri H.M."/>
            <person name="Kolonay J.F."/>
            <person name="Dodson R.J."/>
            <person name="Daugherty S.C."/>
            <person name="Brinkac L.M."/>
            <person name="Sullivan S.A."/>
            <person name="Madupu R."/>
            <person name="Nelson K.E."/>
            <person name="Kang K.H."/>
            <person name="Impraim M."/>
            <person name="Tran K."/>
            <person name="Robinson J.M."/>
            <person name="Forberger H.A."/>
            <person name="Fraser C.M."/>
            <person name="Zinder S.H."/>
            <person name="Heidelberg J.F."/>
        </authorList>
    </citation>
    <scope>NUCLEOTIDE SEQUENCE [LARGE SCALE GENOMIC DNA]</scope>
    <source>
        <strain>ATCC BAA-2266 / KCTC 15142 / 195</strain>
    </source>
</reference>